<name>FADB_SHIF8</name>
<dbReference type="EC" id="4.2.1.17" evidence="1"/>
<dbReference type="EC" id="5.1.2.3" evidence="1"/>
<dbReference type="EC" id="5.3.3.8" evidence="1"/>
<dbReference type="EC" id="1.1.1.35" evidence="1"/>
<dbReference type="EMBL" id="CP000266">
    <property type="protein sequence ID" value="ABF05679.1"/>
    <property type="molecule type" value="Genomic_DNA"/>
</dbReference>
<dbReference type="RefSeq" id="WP_000965917.1">
    <property type="nucleotide sequence ID" value="NC_008258.1"/>
</dbReference>
<dbReference type="SMR" id="Q0SZ36"/>
<dbReference type="KEGG" id="sfv:SFV_3654"/>
<dbReference type="HOGENOM" id="CLU_009834_16_3_6"/>
<dbReference type="UniPathway" id="UPA00659"/>
<dbReference type="Proteomes" id="UP000000659">
    <property type="component" value="Chromosome"/>
</dbReference>
<dbReference type="GO" id="GO:0036125">
    <property type="term" value="C:fatty acid beta-oxidation multienzyme complex"/>
    <property type="evidence" value="ECO:0007669"/>
    <property type="project" value="InterPro"/>
</dbReference>
<dbReference type="GO" id="GO:0008692">
    <property type="term" value="F:3-hydroxybutyryl-CoA epimerase activity"/>
    <property type="evidence" value="ECO:0007669"/>
    <property type="project" value="UniProtKB-UniRule"/>
</dbReference>
<dbReference type="GO" id="GO:0004165">
    <property type="term" value="F:delta(3)-delta(2)-enoyl-CoA isomerase activity"/>
    <property type="evidence" value="ECO:0007669"/>
    <property type="project" value="UniProtKB-UniRule"/>
</dbReference>
<dbReference type="GO" id="GO:0004300">
    <property type="term" value="F:enoyl-CoA hydratase activity"/>
    <property type="evidence" value="ECO:0007669"/>
    <property type="project" value="UniProtKB-UniRule"/>
</dbReference>
<dbReference type="GO" id="GO:0016509">
    <property type="term" value="F:long-chain-3-hydroxyacyl-CoA dehydrogenase activity"/>
    <property type="evidence" value="ECO:0007669"/>
    <property type="project" value="TreeGrafter"/>
</dbReference>
<dbReference type="GO" id="GO:0070403">
    <property type="term" value="F:NAD+ binding"/>
    <property type="evidence" value="ECO:0007669"/>
    <property type="project" value="InterPro"/>
</dbReference>
<dbReference type="GO" id="GO:0006635">
    <property type="term" value="P:fatty acid beta-oxidation"/>
    <property type="evidence" value="ECO:0007669"/>
    <property type="project" value="UniProtKB-UniRule"/>
</dbReference>
<dbReference type="CDD" id="cd06558">
    <property type="entry name" value="crotonase-like"/>
    <property type="match status" value="1"/>
</dbReference>
<dbReference type="FunFam" id="1.10.1040.50:FF:000001">
    <property type="entry name" value="Fatty acid oxidation complex subunit alpha"/>
    <property type="match status" value="1"/>
</dbReference>
<dbReference type="FunFam" id="3.90.226.10:FF:000018">
    <property type="entry name" value="Fatty acid oxidation complex subunit alpha"/>
    <property type="match status" value="1"/>
</dbReference>
<dbReference type="FunFam" id="3.40.50.720:FF:000009">
    <property type="entry name" value="Fatty oxidation complex, alpha subunit"/>
    <property type="match status" value="1"/>
</dbReference>
<dbReference type="Gene3D" id="1.10.1040.50">
    <property type="match status" value="1"/>
</dbReference>
<dbReference type="Gene3D" id="3.90.226.10">
    <property type="entry name" value="2-enoyl-CoA Hydratase, Chain A, domain 1"/>
    <property type="match status" value="1"/>
</dbReference>
<dbReference type="Gene3D" id="3.40.50.720">
    <property type="entry name" value="NAD(P)-binding Rossmann-like Domain"/>
    <property type="match status" value="1"/>
</dbReference>
<dbReference type="HAMAP" id="MF_01621">
    <property type="entry name" value="FadB"/>
    <property type="match status" value="1"/>
</dbReference>
<dbReference type="InterPro" id="IPR006180">
    <property type="entry name" value="3-OHacyl-CoA_DH_CS"/>
</dbReference>
<dbReference type="InterPro" id="IPR006176">
    <property type="entry name" value="3-OHacyl-CoA_DH_NAD-bd"/>
</dbReference>
<dbReference type="InterPro" id="IPR006108">
    <property type="entry name" value="3HC_DH_C"/>
</dbReference>
<dbReference type="InterPro" id="IPR008927">
    <property type="entry name" value="6-PGluconate_DH-like_C_sf"/>
</dbReference>
<dbReference type="InterPro" id="IPR029045">
    <property type="entry name" value="ClpP/crotonase-like_dom_sf"/>
</dbReference>
<dbReference type="InterPro" id="IPR018376">
    <property type="entry name" value="Enoyl-CoA_hyd/isom_CS"/>
</dbReference>
<dbReference type="InterPro" id="IPR001753">
    <property type="entry name" value="Enoyl-CoA_hydra/iso"/>
</dbReference>
<dbReference type="InterPro" id="IPR050136">
    <property type="entry name" value="FA_oxidation_alpha_subunit"/>
</dbReference>
<dbReference type="InterPro" id="IPR012799">
    <property type="entry name" value="FadB"/>
</dbReference>
<dbReference type="InterPro" id="IPR036291">
    <property type="entry name" value="NAD(P)-bd_dom_sf"/>
</dbReference>
<dbReference type="NCBIfam" id="TIGR02437">
    <property type="entry name" value="FadB"/>
    <property type="match status" value="1"/>
</dbReference>
<dbReference type="NCBIfam" id="NF008727">
    <property type="entry name" value="PRK11730.1"/>
    <property type="match status" value="1"/>
</dbReference>
<dbReference type="PANTHER" id="PTHR43612">
    <property type="entry name" value="TRIFUNCTIONAL ENZYME SUBUNIT ALPHA"/>
    <property type="match status" value="1"/>
</dbReference>
<dbReference type="PANTHER" id="PTHR43612:SF3">
    <property type="entry name" value="TRIFUNCTIONAL ENZYME SUBUNIT ALPHA, MITOCHONDRIAL"/>
    <property type="match status" value="1"/>
</dbReference>
<dbReference type="Pfam" id="PF00725">
    <property type="entry name" value="3HCDH"/>
    <property type="match status" value="2"/>
</dbReference>
<dbReference type="Pfam" id="PF02737">
    <property type="entry name" value="3HCDH_N"/>
    <property type="match status" value="1"/>
</dbReference>
<dbReference type="Pfam" id="PF00378">
    <property type="entry name" value="ECH_1"/>
    <property type="match status" value="1"/>
</dbReference>
<dbReference type="SUPFAM" id="SSF48179">
    <property type="entry name" value="6-phosphogluconate dehydrogenase C-terminal domain-like"/>
    <property type="match status" value="2"/>
</dbReference>
<dbReference type="SUPFAM" id="SSF52096">
    <property type="entry name" value="ClpP/crotonase"/>
    <property type="match status" value="1"/>
</dbReference>
<dbReference type="SUPFAM" id="SSF51735">
    <property type="entry name" value="NAD(P)-binding Rossmann-fold domains"/>
    <property type="match status" value="1"/>
</dbReference>
<dbReference type="PROSITE" id="PS00067">
    <property type="entry name" value="3HCDH"/>
    <property type="match status" value="1"/>
</dbReference>
<dbReference type="PROSITE" id="PS00166">
    <property type="entry name" value="ENOYL_COA_HYDRATASE"/>
    <property type="match status" value="1"/>
</dbReference>
<organism>
    <name type="scientific">Shigella flexneri serotype 5b (strain 8401)</name>
    <dbReference type="NCBI Taxonomy" id="373384"/>
    <lineage>
        <taxon>Bacteria</taxon>
        <taxon>Pseudomonadati</taxon>
        <taxon>Pseudomonadota</taxon>
        <taxon>Gammaproteobacteria</taxon>
        <taxon>Enterobacterales</taxon>
        <taxon>Enterobacteriaceae</taxon>
        <taxon>Shigella</taxon>
    </lineage>
</organism>
<reference key="1">
    <citation type="journal article" date="2006" name="BMC Genomics">
        <title>Complete genome sequence of Shigella flexneri 5b and comparison with Shigella flexneri 2a.</title>
        <authorList>
            <person name="Nie H."/>
            <person name="Yang F."/>
            <person name="Zhang X."/>
            <person name="Yang J."/>
            <person name="Chen L."/>
            <person name="Wang J."/>
            <person name="Xiong Z."/>
            <person name="Peng J."/>
            <person name="Sun L."/>
            <person name="Dong J."/>
            <person name="Xue Y."/>
            <person name="Xu X."/>
            <person name="Chen S."/>
            <person name="Yao Z."/>
            <person name="Shen Y."/>
            <person name="Jin Q."/>
        </authorList>
    </citation>
    <scope>NUCLEOTIDE SEQUENCE [LARGE SCALE GENOMIC DNA]</scope>
    <source>
        <strain>8401</strain>
    </source>
</reference>
<sequence>MLYKGDTLYLDWLEDGIAELVFDAPGSVNKLDTATVASLGEAIGVLEQQSDLKGLLLRSNKAAFIVGADITEFLSLFLVPEEQLSQWLHFANSVFNRLEDLPVPTIAAVNGYALGGGCECVLATDYRLATPDLRIGLPETKLGIMPGFGGSVRMPRMLGADSALEIIAAGKDVGADQALKIGLVDGVVKAEKLIEGAMAILRQAINGDLDWKAKRQPKQEPLKLSKIEATMSFTIAKGMVAQTAGKHYPAPITAVKTIEAAARFGREEALNLENKSFVPLAHTNEARALVGIFLNDQYVKGKAKKLTKDVETPKQAAVLGAGIMGGGIAYQSAWKGVPVVMKDINDKSLTLGMTEAAKLLNKQLERGKIDGLKLAGVISTIHPTLDYAGFDRVDIVVEAVVENPKVKKAVLAETEQKVRQDTVLASNTSTIPISELANALERPENFCGMHFFNPVHRMPLVEIIRGEKSSDETIAKVVAWASKMGKTPIVVNDCPGFFVNRVLFPYFAGFSQLLRDGADFRKIDKVMEKQFGWPMGPAYLLDVVGIDTAHHAQAVMAAGFPQRMQKDYRDAIDALFDANRFGQKNGLGFWRYKEDSKGKPKKEEDAAVEDLLAEVSQPKRDFSEEEIIARMMIPMVNEVVRCLEEGIIATPAEADMALVYGLGFPPFHGGAFRWLDTLGSAKYLDMAQQYQHLGPLYEVPEGLRNKARHNEPYYPPVEPARPVGDLKTA</sequence>
<protein>
    <recommendedName>
        <fullName evidence="1">Fatty acid oxidation complex subunit alpha</fullName>
    </recommendedName>
    <domain>
        <recommendedName>
            <fullName evidence="1">Enoyl-CoA hydratase/Delta(3)-cis-Delta(2)-trans-enoyl-CoA isomerase/3-hydroxybutyryl-CoA epimerase</fullName>
            <ecNumber evidence="1">4.2.1.17</ecNumber>
            <ecNumber evidence="1">5.1.2.3</ecNumber>
            <ecNumber evidence="1">5.3.3.8</ecNumber>
        </recommendedName>
    </domain>
    <domain>
        <recommendedName>
            <fullName evidence="1">3-hydroxyacyl-CoA dehydrogenase</fullName>
            <ecNumber evidence="1">1.1.1.35</ecNumber>
        </recommendedName>
    </domain>
</protein>
<keyword id="KW-0276">Fatty acid metabolism</keyword>
<keyword id="KW-0413">Isomerase</keyword>
<keyword id="KW-0442">Lipid degradation</keyword>
<keyword id="KW-0443">Lipid metabolism</keyword>
<keyword id="KW-0456">Lyase</keyword>
<keyword id="KW-0511">Multifunctional enzyme</keyword>
<keyword id="KW-0520">NAD</keyword>
<keyword id="KW-0560">Oxidoreductase</keyword>
<accession>Q0SZ36</accession>
<evidence type="ECO:0000255" key="1">
    <source>
        <dbReference type="HAMAP-Rule" id="MF_01621"/>
    </source>
</evidence>
<evidence type="ECO:0000256" key="2">
    <source>
        <dbReference type="SAM" id="MobiDB-lite"/>
    </source>
</evidence>
<proteinExistence type="inferred from homology"/>
<gene>
    <name evidence="1" type="primary">fadB</name>
    <name type="ordered locus">SFV_3654</name>
</gene>
<comment type="function">
    <text evidence="1">Involved in the aerobic and anaerobic degradation of long-chain fatty acids via beta-oxidation cycle. Catalyzes the formation of 3-oxoacyl-CoA from enoyl-CoA via L-3-hydroxyacyl-CoA. It can also use D-3-hydroxyacyl-CoA and cis-3-enoyl-CoA as substrate.</text>
</comment>
<comment type="catalytic activity">
    <reaction evidence="1">
        <text>a (3S)-3-hydroxyacyl-CoA + NAD(+) = a 3-oxoacyl-CoA + NADH + H(+)</text>
        <dbReference type="Rhea" id="RHEA:22432"/>
        <dbReference type="ChEBI" id="CHEBI:15378"/>
        <dbReference type="ChEBI" id="CHEBI:57318"/>
        <dbReference type="ChEBI" id="CHEBI:57540"/>
        <dbReference type="ChEBI" id="CHEBI:57945"/>
        <dbReference type="ChEBI" id="CHEBI:90726"/>
        <dbReference type="EC" id="1.1.1.35"/>
    </reaction>
</comment>
<comment type="catalytic activity">
    <reaction evidence="1">
        <text>a (3S)-3-hydroxyacyl-CoA = a (2E)-enoyl-CoA + H2O</text>
        <dbReference type="Rhea" id="RHEA:16105"/>
        <dbReference type="ChEBI" id="CHEBI:15377"/>
        <dbReference type="ChEBI" id="CHEBI:57318"/>
        <dbReference type="ChEBI" id="CHEBI:58856"/>
        <dbReference type="EC" id="4.2.1.17"/>
    </reaction>
</comment>
<comment type="catalytic activity">
    <reaction evidence="1">
        <text>a 4-saturated-(3S)-3-hydroxyacyl-CoA = a (3E)-enoyl-CoA + H2O</text>
        <dbReference type="Rhea" id="RHEA:20724"/>
        <dbReference type="ChEBI" id="CHEBI:15377"/>
        <dbReference type="ChEBI" id="CHEBI:58521"/>
        <dbReference type="ChEBI" id="CHEBI:137480"/>
        <dbReference type="EC" id="4.2.1.17"/>
    </reaction>
</comment>
<comment type="catalytic activity">
    <reaction evidence="1">
        <text>(3S)-3-hydroxybutanoyl-CoA = (3R)-3-hydroxybutanoyl-CoA</text>
        <dbReference type="Rhea" id="RHEA:21760"/>
        <dbReference type="ChEBI" id="CHEBI:57315"/>
        <dbReference type="ChEBI" id="CHEBI:57316"/>
        <dbReference type="EC" id="5.1.2.3"/>
    </reaction>
</comment>
<comment type="catalytic activity">
    <reaction evidence="1">
        <text>a (3Z)-enoyl-CoA = a 4-saturated (2E)-enoyl-CoA</text>
        <dbReference type="Rhea" id="RHEA:45900"/>
        <dbReference type="ChEBI" id="CHEBI:85097"/>
        <dbReference type="ChEBI" id="CHEBI:85489"/>
        <dbReference type="EC" id="5.3.3.8"/>
    </reaction>
</comment>
<comment type="catalytic activity">
    <reaction evidence="1">
        <text>a (3E)-enoyl-CoA = a 4-saturated (2E)-enoyl-CoA</text>
        <dbReference type="Rhea" id="RHEA:45228"/>
        <dbReference type="ChEBI" id="CHEBI:58521"/>
        <dbReference type="ChEBI" id="CHEBI:85097"/>
        <dbReference type="EC" id="5.3.3.8"/>
    </reaction>
</comment>
<comment type="pathway">
    <text evidence="1">Lipid metabolism; fatty acid beta-oxidation.</text>
</comment>
<comment type="subunit">
    <text evidence="1">Heterotetramer of two alpha chains (FadB) and two beta chains (FadA).</text>
</comment>
<comment type="similarity">
    <text evidence="1">In the N-terminal section; belongs to the enoyl-CoA hydratase/isomerase family.</text>
</comment>
<comment type="similarity">
    <text evidence="1">In the C-terminal section; belongs to the 3-hydroxyacyl-CoA dehydrogenase family.</text>
</comment>
<feature type="chain" id="PRO_1000069582" description="Fatty acid oxidation complex subunit alpha">
    <location>
        <begin position="1"/>
        <end position="729"/>
    </location>
</feature>
<feature type="region of interest" description="Enoyl-CoA hydratase/isomerase" evidence="1">
    <location>
        <begin position="1"/>
        <end position="189"/>
    </location>
</feature>
<feature type="region of interest" description="3-hydroxyacyl-CoA dehydrogenase" evidence="1">
    <location>
        <begin position="311"/>
        <end position="729"/>
    </location>
</feature>
<feature type="region of interest" description="Disordered" evidence="2">
    <location>
        <begin position="708"/>
        <end position="729"/>
    </location>
</feature>
<feature type="active site" description="For 3-hydroxyacyl-CoA dehydrogenase activity" evidence="1">
    <location>
        <position position="450"/>
    </location>
</feature>
<feature type="binding site" evidence="1">
    <location>
        <position position="296"/>
    </location>
    <ligand>
        <name>substrate</name>
    </ligand>
</feature>
<feature type="binding site" evidence="1">
    <location>
        <position position="324"/>
    </location>
    <ligand>
        <name>NAD(+)</name>
        <dbReference type="ChEBI" id="CHEBI:57540"/>
    </ligand>
</feature>
<feature type="binding site" evidence="1">
    <location>
        <position position="343"/>
    </location>
    <ligand>
        <name>NAD(+)</name>
        <dbReference type="ChEBI" id="CHEBI:57540"/>
    </ligand>
</feature>
<feature type="binding site" evidence="1">
    <location>
        <begin position="400"/>
        <end position="402"/>
    </location>
    <ligand>
        <name>NAD(+)</name>
        <dbReference type="ChEBI" id="CHEBI:57540"/>
    </ligand>
</feature>
<feature type="binding site" evidence="1">
    <location>
        <position position="407"/>
    </location>
    <ligand>
        <name>NAD(+)</name>
        <dbReference type="ChEBI" id="CHEBI:57540"/>
    </ligand>
</feature>
<feature type="binding site" evidence="1">
    <location>
        <position position="429"/>
    </location>
    <ligand>
        <name>NAD(+)</name>
        <dbReference type="ChEBI" id="CHEBI:57540"/>
    </ligand>
</feature>
<feature type="binding site" evidence="1">
    <location>
        <position position="453"/>
    </location>
    <ligand>
        <name>NAD(+)</name>
        <dbReference type="ChEBI" id="CHEBI:57540"/>
    </ligand>
</feature>
<feature type="binding site" evidence="1">
    <location>
        <position position="500"/>
    </location>
    <ligand>
        <name>substrate</name>
    </ligand>
</feature>
<feature type="binding site" evidence="1">
    <location>
        <position position="660"/>
    </location>
    <ligand>
        <name>substrate</name>
    </ligand>
</feature>
<feature type="site" description="Important for catalytic activity" evidence="1">
    <location>
        <position position="119"/>
    </location>
</feature>
<feature type="site" description="Important for catalytic activity" evidence="1">
    <location>
        <position position="139"/>
    </location>
</feature>